<accession>Q2GAU7</accession>
<dbReference type="EMBL" id="CP000248">
    <property type="protein sequence ID" value="ABD25026.1"/>
    <property type="molecule type" value="Genomic_DNA"/>
</dbReference>
<dbReference type="RefSeq" id="WP_011444240.1">
    <property type="nucleotide sequence ID" value="NC_007794.1"/>
</dbReference>
<dbReference type="SMR" id="Q2GAU7"/>
<dbReference type="STRING" id="279238.Saro_0579"/>
<dbReference type="KEGG" id="nar:Saro_0579"/>
<dbReference type="eggNOG" id="COG0218">
    <property type="taxonomic scope" value="Bacteria"/>
</dbReference>
<dbReference type="HOGENOM" id="CLU_033732_2_0_5"/>
<dbReference type="Proteomes" id="UP000009134">
    <property type="component" value="Chromosome"/>
</dbReference>
<dbReference type="GO" id="GO:0005829">
    <property type="term" value="C:cytosol"/>
    <property type="evidence" value="ECO:0007669"/>
    <property type="project" value="TreeGrafter"/>
</dbReference>
<dbReference type="GO" id="GO:0005525">
    <property type="term" value="F:GTP binding"/>
    <property type="evidence" value="ECO:0007669"/>
    <property type="project" value="UniProtKB-UniRule"/>
</dbReference>
<dbReference type="GO" id="GO:0046872">
    <property type="term" value="F:metal ion binding"/>
    <property type="evidence" value="ECO:0007669"/>
    <property type="project" value="UniProtKB-KW"/>
</dbReference>
<dbReference type="GO" id="GO:0000917">
    <property type="term" value="P:division septum assembly"/>
    <property type="evidence" value="ECO:0007669"/>
    <property type="project" value="UniProtKB-KW"/>
</dbReference>
<dbReference type="CDD" id="cd01876">
    <property type="entry name" value="YihA_EngB"/>
    <property type="match status" value="1"/>
</dbReference>
<dbReference type="Gene3D" id="3.40.50.300">
    <property type="entry name" value="P-loop containing nucleotide triphosphate hydrolases"/>
    <property type="match status" value="1"/>
</dbReference>
<dbReference type="HAMAP" id="MF_00321">
    <property type="entry name" value="GTPase_EngB"/>
    <property type="match status" value="1"/>
</dbReference>
<dbReference type="InterPro" id="IPR030393">
    <property type="entry name" value="G_ENGB_dom"/>
</dbReference>
<dbReference type="InterPro" id="IPR006073">
    <property type="entry name" value="GTP-bd"/>
</dbReference>
<dbReference type="InterPro" id="IPR019987">
    <property type="entry name" value="GTP-bd_ribosome_bio_YsxC"/>
</dbReference>
<dbReference type="InterPro" id="IPR027417">
    <property type="entry name" value="P-loop_NTPase"/>
</dbReference>
<dbReference type="InterPro" id="IPR005225">
    <property type="entry name" value="Small_GTP-bd"/>
</dbReference>
<dbReference type="NCBIfam" id="TIGR03598">
    <property type="entry name" value="GTPase_YsxC"/>
    <property type="match status" value="1"/>
</dbReference>
<dbReference type="NCBIfam" id="TIGR00231">
    <property type="entry name" value="small_GTP"/>
    <property type="match status" value="1"/>
</dbReference>
<dbReference type="PANTHER" id="PTHR11649:SF13">
    <property type="entry name" value="ENGB-TYPE G DOMAIN-CONTAINING PROTEIN"/>
    <property type="match status" value="1"/>
</dbReference>
<dbReference type="PANTHER" id="PTHR11649">
    <property type="entry name" value="MSS1/TRME-RELATED GTP-BINDING PROTEIN"/>
    <property type="match status" value="1"/>
</dbReference>
<dbReference type="Pfam" id="PF01926">
    <property type="entry name" value="MMR_HSR1"/>
    <property type="match status" value="1"/>
</dbReference>
<dbReference type="SUPFAM" id="SSF52540">
    <property type="entry name" value="P-loop containing nucleoside triphosphate hydrolases"/>
    <property type="match status" value="1"/>
</dbReference>
<dbReference type="PROSITE" id="PS51706">
    <property type="entry name" value="G_ENGB"/>
    <property type="match status" value="1"/>
</dbReference>
<gene>
    <name evidence="1" type="primary">engB</name>
    <name type="ordered locus">Saro_0579</name>
</gene>
<organism>
    <name type="scientific">Novosphingobium aromaticivorans (strain ATCC 700278 / DSM 12444 / CCUG 56034 / CIP 105152 / NBRC 16084 / F199)</name>
    <dbReference type="NCBI Taxonomy" id="279238"/>
    <lineage>
        <taxon>Bacteria</taxon>
        <taxon>Pseudomonadati</taxon>
        <taxon>Pseudomonadota</taxon>
        <taxon>Alphaproteobacteria</taxon>
        <taxon>Sphingomonadales</taxon>
        <taxon>Sphingomonadaceae</taxon>
        <taxon>Novosphingobium</taxon>
    </lineage>
</organism>
<evidence type="ECO:0000255" key="1">
    <source>
        <dbReference type="HAMAP-Rule" id="MF_00321"/>
    </source>
</evidence>
<comment type="function">
    <text evidence="1">Necessary for normal cell division and for the maintenance of normal septation.</text>
</comment>
<comment type="cofactor">
    <cofactor evidence="1">
        <name>Mg(2+)</name>
        <dbReference type="ChEBI" id="CHEBI:18420"/>
    </cofactor>
</comment>
<comment type="similarity">
    <text evidence="1">Belongs to the TRAFAC class TrmE-Era-EngA-EngB-Septin-like GTPase superfamily. EngB GTPase family.</text>
</comment>
<protein>
    <recommendedName>
        <fullName evidence="1">Probable GTP-binding protein EngB</fullName>
    </recommendedName>
</protein>
<name>ENGB_NOVAD</name>
<reference key="1">
    <citation type="submission" date="2006-01" db="EMBL/GenBank/DDBJ databases">
        <title>Complete sequence of Novosphingobium aromaticivorans DSM 12444.</title>
        <authorList>
            <consortium name="US DOE Joint Genome Institute"/>
            <person name="Copeland A."/>
            <person name="Lucas S."/>
            <person name="Lapidus A."/>
            <person name="Barry K."/>
            <person name="Detter J.C."/>
            <person name="Glavina T."/>
            <person name="Hammon N."/>
            <person name="Israni S."/>
            <person name="Pitluck S."/>
            <person name="Chain P."/>
            <person name="Malfatti S."/>
            <person name="Shin M."/>
            <person name="Vergez L."/>
            <person name="Schmutz J."/>
            <person name="Larimer F."/>
            <person name="Land M."/>
            <person name="Kyrpides N."/>
            <person name="Ivanova N."/>
            <person name="Fredrickson J."/>
            <person name="Balkwill D."/>
            <person name="Romine M.F."/>
            <person name="Richardson P."/>
        </authorList>
    </citation>
    <scope>NUCLEOTIDE SEQUENCE [LARGE SCALE GENOMIC DNA]</scope>
    <source>
        <strain>ATCC 700278 / DSM 12444 / CCUG 56034 / CIP 105152 / NBRC 16084 / F199</strain>
    </source>
</reference>
<keyword id="KW-0131">Cell cycle</keyword>
<keyword id="KW-0132">Cell division</keyword>
<keyword id="KW-0342">GTP-binding</keyword>
<keyword id="KW-0460">Magnesium</keyword>
<keyword id="KW-0479">Metal-binding</keyword>
<keyword id="KW-0547">Nucleotide-binding</keyword>
<keyword id="KW-1185">Reference proteome</keyword>
<keyword id="KW-0717">Septation</keyword>
<feature type="chain" id="PRO_0000266909" description="Probable GTP-binding protein EngB">
    <location>
        <begin position="1"/>
        <end position="217"/>
    </location>
</feature>
<feature type="domain" description="EngB-type G" evidence="1">
    <location>
        <begin position="40"/>
        <end position="217"/>
    </location>
</feature>
<feature type="binding site" evidence="1">
    <location>
        <begin position="48"/>
        <end position="55"/>
    </location>
    <ligand>
        <name>GTP</name>
        <dbReference type="ChEBI" id="CHEBI:37565"/>
    </ligand>
</feature>
<feature type="binding site" evidence="1">
    <location>
        <position position="55"/>
    </location>
    <ligand>
        <name>Mg(2+)</name>
        <dbReference type="ChEBI" id="CHEBI:18420"/>
    </ligand>
</feature>
<feature type="binding site" evidence="1">
    <location>
        <begin position="75"/>
        <end position="79"/>
    </location>
    <ligand>
        <name>GTP</name>
        <dbReference type="ChEBI" id="CHEBI:37565"/>
    </ligand>
</feature>
<feature type="binding site" evidence="1">
    <location>
        <position position="77"/>
    </location>
    <ligand>
        <name>Mg(2+)</name>
        <dbReference type="ChEBI" id="CHEBI:18420"/>
    </ligand>
</feature>
<feature type="binding site" evidence="1">
    <location>
        <begin position="95"/>
        <end position="98"/>
    </location>
    <ligand>
        <name>GTP</name>
        <dbReference type="ChEBI" id="CHEBI:37565"/>
    </ligand>
</feature>
<feature type="binding site" evidence="1">
    <location>
        <begin position="162"/>
        <end position="165"/>
    </location>
    <ligand>
        <name>GTP</name>
        <dbReference type="ChEBI" id="CHEBI:37565"/>
    </ligand>
</feature>
<feature type="binding site" evidence="1">
    <location>
        <begin position="196"/>
        <end position="198"/>
    </location>
    <ligand>
        <name>GTP</name>
        <dbReference type="ChEBI" id="CHEBI:37565"/>
    </ligand>
</feature>
<proteinExistence type="inferred from homology"/>
<sequence>MTPEEQAAHQELIEQARLLFAGRVEFLKSAPALKFLPDPDVPEIAFAGRSNVGKSSLLNALTGRKSLARTSVTPGRTQELNYFEVGEPTRLRLVDMPGYGFAKAPPKVVETWRRLVRDFLRGRVVLKRTLLLIDSRHGVKPVDDDMMQMLDEAGVGYRIVLTKADKIKASELEKVTAETIAAARKRTAAYPEIIVTSSEKKMGIEELRAAVLQDAMG</sequence>